<comment type="subcellular location">
    <subcellularLocation>
        <location evidence="3">Membrane</location>
        <topology evidence="3">Multi-pass membrane protein</topology>
    </subcellularLocation>
</comment>
<comment type="tissue specificity">
    <text evidence="2">Expressed in neurons RIF/RIG and PVT.</text>
</comment>
<comment type="similarity">
    <text evidence="3">Belongs to the nematode receptor-like protein sra family.</text>
</comment>
<name>SRA12_CAEEL</name>
<evidence type="ECO:0000255" key="1"/>
<evidence type="ECO:0000269" key="2">
    <source>
    </source>
</evidence>
<evidence type="ECO:0000305" key="3"/>
<feature type="chain" id="PRO_0000104478" description="Serpentine receptor class alpha-12">
    <location>
        <begin position="1"/>
        <end position="327"/>
    </location>
</feature>
<feature type="topological domain" description="Extracellular" evidence="1">
    <location>
        <begin position="1"/>
        <end position="18"/>
    </location>
</feature>
<feature type="transmembrane region" description="Helical; Name=1" evidence="1">
    <location>
        <begin position="19"/>
        <end position="39"/>
    </location>
</feature>
<feature type="topological domain" description="Cytoplasmic" evidence="1">
    <location>
        <begin position="40"/>
        <end position="53"/>
    </location>
</feature>
<feature type="transmembrane region" description="Helical; Name=2" evidence="1">
    <location>
        <begin position="54"/>
        <end position="74"/>
    </location>
</feature>
<feature type="topological domain" description="Extracellular" evidence="1">
    <location>
        <begin position="75"/>
        <end position="98"/>
    </location>
</feature>
<feature type="transmembrane region" description="Helical; Name=3" evidence="1">
    <location>
        <begin position="99"/>
        <end position="119"/>
    </location>
</feature>
<feature type="topological domain" description="Cytoplasmic" evidence="1">
    <location>
        <begin position="120"/>
        <end position="138"/>
    </location>
</feature>
<feature type="transmembrane region" description="Helical; Name=4" evidence="1">
    <location>
        <begin position="139"/>
        <end position="159"/>
    </location>
</feature>
<feature type="topological domain" description="Extracellular" evidence="1">
    <location>
        <begin position="160"/>
        <end position="185"/>
    </location>
</feature>
<feature type="transmembrane region" description="Helical; Name=5" evidence="1">
    <location>
        <begin position="186"/>
        <end position="206"/>
    </location>
</feature>
<feature type="topological domain" description="Cytoplasmic" evidence="1">
    <location>
        <begin position="207"/>
        <end position="234"/>
    </location>
</feature>
<feature type="transmembrane region" description="Helical; Name=6" evidence="1">
    <location>
        <begin position="235"/>
        <end position="255"/>
    </location>
</feature>
<feature type="topological domain" description="Extracellular" evidence="1">
    <location>
        <begin position="256"/>
        <end position="270"/>
    </location>
</feature>
<feature type="transmembrane region" description="Helical; Name=7" evidence="1">
    <location>
        <begin position="271"/>
        <end position="291"/>
    </location>
</feature>
<feature type="topological domain" description="Cytoplasmic" evidence="1">
    <location>
        <begin position="292"/>
        <end position="327"/>
    </location>
</feature>
<dbReference type="EMBL" id="AY037792">
    <property type="protein sequence ID" value="AAK94756.1"/>
    <property type="molecule type" value="Transcribed_RNA"/>
</dbReference>
<dbReference type="EMBL" id="Z37092">
    <property type="protein sequence ID" value="CAA85460.2"/>
    <property type="molecule type" value="Genomic_DNA"/>
</dbReference>
<dbReference type="PIR" id="T22191">
    <property type="entry name" value="T22191"/>
</dbReference>
<dbReference type="RefSeq" id="NP_496346.2">
    <property type="nucleotide sequence ID" value="NM_063945.5"/>
</dbReference>
<dbReference type="SMR" id="Q20410"/>
<dbReference type="FunCoup" id="Q20410">
    <property type="interactions" value="2"/>
</dbReference>
<dbReference type="STRING" id="6239.F44F4.7.1"/>
<dbReference type="PaxDb" id="6239-F44F4.7"/>
<dbReference type="EnsemblMetazoa" id="F44F4.7.1">
    <property type="protein sequence ID" value="F44F4.7.1"/>
    <property type="gene ID" value="WBGene00005038"/>
</dbReference>
<dbReference type="GeneID" id="3565216"/>
<dbReference type="KEGG" id="cel:CELE_F44F4.7"/>
<dbReference type="UCSC" id="F44F4.7">
    <property type="organism name" value="c. elegans"/>
</dbReference>
<dbReference type="AGR" id="WB:WBGene00005038"/>
<dbReference type="CTD" id="3565216"/>
<dbReference type="WormBase" id="F44F4.7">
    <property type="protein sequence ID" value="CE30668"/>
    <property type="gene ID" value="WBGene00005038"/>
    <property type="gene designation" value="sra-12"/>
</dbReference>
<dbReference type="eggNOG" id="ENOG502TFXY">
    <property type="taxonomic scope" value="Eukaryota"/>
</dbReference>
<dbReference type="GeneTree" id="ENSGT00970000195848"/>
<dbReference type="HOGENOM" id="CLU_048025_0_1_1"/>
<dbReference type="InParanoid" id="Q20410"/>
<dbReference type="OMA" id="YAPPYAC"/>
<dbReference type="OrthoDB" id="5792629at2759"/>
<dbReference type="PhylomeDB" id="Q20410"/>
<dbReference type="PRO" id="PR:Q20410"/>
<dbReference type="Proteomes" id="UP000001940">
    <property type="component" value="Chromosome II"/>
</dbReference>
<dbReference type="Bgee" id="WBGene00005038">
    <property type="expression patterns" value="Expressed in larva"/>
</dbReference>
<dbReference type="GO" id="GO:0016020">
    <property type="term" value="C:membrane"/>
    <property type="evidence" value="ECO:0007669"/>
    <property type="project" value="UniProtKB-SubCell"/>
</dbReference>
<dbReference type="GO" id="GO:0004930">
    <property type="term" value="F:G protein-coupled receptor activity"/>
    <property type="evidence" value="ECO:0007669"/>
    <property type="project" value="InterPro"/>
</dbReference>
<dbReference type="GO" id="GO:0004984">
    <property type="term" value="F:olfactory receptor activity"/>
    <property type="evidence" value="ECO:0000318"/>
    <property type="project" value="GO_Central"/>
</dbReference>
<dbReference type="GO" id="GO:0050907">
    <property type="term" value="P:detection of chemical stimulus involved in sensory perception"/>
    <property type="evidence" value="ECO:0000318"/>
    <property type="project" value="GO_Central"/>
</dbReference>
<dbReference type="FunFam" id="1.20.1070.10:FF:000683">
    <property type="entry name" value="Serpentine receptor class alpha-12"/>
    <property type="match status" value="1"/>
</dbReference>
<dbReference type="Gene3D" id="1.20.1070.10">
    <property type="entry name" value="Rhodopsin 7-helix transmembrane proteins"/>
    <property type="match status" value="1"/>
</dbReference>
<dbReference type="InterPro" id="IPR000344">
    <property type="entry name" value="7TM_GPCR_serpentine_rcpt_Sra"/>
</dbReference>
<dbReference type="InterPro" id="IPR051080">
    <property type="entry name" value="Nematode_rcpt-like_serp_alpha"/>
</dbReference>
<dbReference type="PANTHER" id="PTHR31357">
    <property type="entry name" value="SERPENTINE RECEPTOR CLASS ALPHA-10"/>
    <property type="match status" value="1"/>
</dbReference>
<dbReference type="PANTHER" id="PTHR31357:SF13">
    <property type="entry name" value="SERPENTINE RECEPTOR CLASS ALPHA-12"/>
    <property type="match status" value="1"/>
</dbReference>
<dbReference type="Pfam" id="PF02117">
    <property type="entry name" value="7TM_GPCR_Sra"/>
    <property type="match status" value="1"/>
</dbReference>
<dbReference type="PRINTS" id="PR00697">
    <property type="entry name" value="TMPROTEINSRA"/>
</dbReference>
<reference key="1">
    <citation type="journal article" date="2001" name="Glycobiology">
        <title>Complementary expression patterns of six nonessential Caenorhabditis elegans core 2/I N-acetylglucosaminyltransferase homologues.</title>
        <authorList>
            <person name="Warren C.E."/>
            <person name="Krizus A."/>
            <person name="Dennis J.W."/>
        </authorList>
    </citation>
    <scope>NUCLEOTIDE SEQUENCE [MRNA]</scope>
    <source>
        <strain>Bristol N2</strain>
    </source>
</reference>
<reference key="2">
    <citation type="journal article" date="1998" name="Science">
        <title>Genome sequence of the nematode C. elegans: a platform for investigating biology.</title>
        <authorList>
            <consortium name="The C. elegans sequencing consortium"/>
        </authorList>
    </citation>
    <scope>NUCLEOTIDE SEQUENCE [LARGE SCALE GENOMIC DNA]</scope>
    <source>
        <strain>Bristol N2</strain>
    </source>
</reference>
<reference key="3">
    <citation type="journal article" date="2004" name="Dev. Cell">
        <title>Genomic cis-regulatory architecture and trans-acting regulators of a single interneuron-specific gene battery in C. elegans.</title>
        <authorList>
            <person name="Wenick A.S."/>
            <person name="Hobert O."/>
        </authorList>
    </citation>
    <scope>TISSUE SPECIFICITY</scope>
</reference>
<organism>
    <name type="scientific">Caenorhabditis elegans</name>
    <dbReference type="NCBI Taxonomy" id="6239"/>
    <lineage>
        <taxon>Eukaryota</taxon>
        <taxon>Metazoa</taxon>
        <taxon>Ecdysozoa</taxon>
        <taxon>Nematoda</taxon>
        <taxon>Chromadorea</taxon>
        <taxon>Rhabditida</taxon>
        <taxon>Rhabditina</taxon>
        <taxon>Rhabditomorpha</taxon>
        <taxon>Rhabditoidea</taxon>
        <taxon>Rhabditidae</taxon>
        <taxon>Peloderinae</taxon>
        <taxon>Caenorhabditis</taxon>
    </lineage>
</organism>
<keyword id="KW-0472">Membrane</keyword>
<keyword id="KW-1185">Reference proteome</keyword>
<keyword id="KW-0812">Transmembrane</keyword>
<keyword id="KW-1133">Transmembrane helix</keyword>
<accession>Q20410</accession>
<accession>Q962C7</accession>
<protein>
    <recommendedName>
        <fullName>Serpentine receptor class alpha-12</fullName>
        <shortName>Protein sra-12</shortName>
    </recommendedName>
</protein>
<sequence>MGCASEIQAEIFTSFGQLFYASFQTILFLATIIGSLLAIFELCKKTTVPDSTRVLLIGSLFFANAHEFAYFTAPLKVFQLNIFNTNTSCYPLISTRDCIPTTTVLAMGISGNMLIQSALSIDRLLATIFPFSYSRMRALPGFVLLIMVLIPAMFTYSWIRLDIVLDDYQMFCSQWSANISTRANTFLEICSYLTVAHIIINCLIILRNRAIEKRCRFDVTQRYLTSENLKTTQAICYLSIAQFLAMFMYSGGVLLMRKNRENIPTLIYFNVIVWVYAPPYACVSLAPLILFSLWNLKKQRHIQIKSVQSAQKETQDDYIRKLQKSWK</sequence>
<gene>
    <name type="primary">sra-12</name>
    <name type="ORF">F44F4.7</name>
</gene>
<proteinExistence type="evidence at transcript level"/>